<name>DNLJ_BUCCC</name>
<accession>Q058C9</accession>
<comment type="function">
    <text evidence="1">DNA ligase that catalyzes the formation of phosphodiester linkages between 5'-phosphoryl and 3'-hydroxyl groups in double-stranded DNA using NAD as a coenzyme and as the energy source for the reaction. It is essential for DNA replication and repair of damaged DNA.</text>
</comment>
<comment type="catalytic activity">
    <reaction evidence="1">
        <text>NAD(+) + (deoxyribonucleotide)n-3'-hydroxyl + 5'-phospho-(deoxyribonucleotide)m = (deoxyribonucleotide)n+m + AMP + beta-nicotinamide D-nucleotide.</text>
        <dbReference type="EC" id="6.5.1.2"/>
    </reaction>
</comment>
<comment type="cofactor">
    <cofactor evidence="1">
        <name>Mg(2+)</name>
        <dbReference type="ChEBI" id="CHEBI:18420"/>
    </cofactor>
    <cofactor evidence="1">
        <name>Mn(2+)</name>
        <dbReference type="ChEBI" id="CHEBI:29035"/>
    </cofactor>
</comment>
<comment type="similarity">
    <text evidence="1">Belongs to the NAD-dependent DNA ligase family. LigA subfamily.</text>
</comment>
<gene>
    <name evidence="1" type="primary">ligA</name>
    <name type="ordered locus">BCc_039</name>
</gene>
<protein>
    <recommendedName>
        <fullName evidence="1">DNA ligase</fullName>
        <ecNumber evidence="1">6.5.1.2</ecNumber>
    </recommendedName>
    <alternativeName>
        <fullName evidence="1">Polydeoxyribonucleotide synthase [NAD(+)]</fullName>
    </alternativeName>
</protein>
<proteinExistence type="inferred from homology"/>
<feature type="chain" id="PRO_0000313157" description="DNA ligase">
    <location>
        <begin position="1"/>
        <end position="587"/>
    </location>
</feature>
<feature type="active site" description="N6-AMP-lysine intermediate" evidence="1">
    <location>
        <position position="118"/>
    </location>
</feature>
<feature type="binding site" evidence="1">
    <location>
        <begin position="32"/>
        <end position="36"/>
    </location>
    <ligand>
        <name>NAD(+)</name>
        <dbReference type="ChEBI" id="CHEBI:57540"/>
    </ligand>
</feature>
<feature type="binding site" evidence="1">
    <location>
        <begin position="84"/>
        <end position="85"/>
    </location>
    <ligand>
        <name>NAD(+)</name>
        <dbReference type="ChEBI" id="CHEBI:57540"/>
    </ligand>
</feature>
<feature type="binding site" evidence="1">
    <location>
        <position position="116"/>
    </location>
    <ligand>
        <name>NAD(+)</name>
        <dbReference type="ChEBI" id="CHEBI:57540"/>
    </ligand>
</feature>
<feature type="binding site" evidence="1">
    <location>
        <position position="139"/>
    </location>
    <ligand>
        <name>NAD(+)</name>
        <dbReference type="ChEBI" id="CHEBI:57540"/>
    </ligand>
</feature>
<feature type="binding site" evidence="1">
    <location>
        <position position="176"/>
    </location>
    <ligand>
        <name>NAD(+)</name>
        <dbReference type="ChEBI" id="CHEBI:57540"/>
    </ligand>
</feature>
<feature type="binding site" evidence="1">
    <location>
        <position position="293"/>
    </location>
    <ligand>
        <name>NAD(+)</name>
        <dbReference type="ChEBI" id="CHEBI:57540"/>
    </ligand>
</feature>
<feature type="binding site" evidence="1">
    <location>
        <position position="317"/>
    </location>
    <ligand>
        <name>NAD(+)</name>
        <dbReference type="ChEBI" id="CHEBI:57540"/>
    </ligand>
</feature>
<feature type="binding site" evidence="1">
    <location>
        <position position="411"/>
    </location>
    <ligand>
        <name>Zn(2+)</name>
        <dbReference type="ChEBI" id="CHEBI:29105"/>
    </ligand>
</feature>
<feature type="binding site" evidence="1">
    <location>
        <position position="414"/>
    </location>
    <ligand>
        <name>Zn(2+)</name>
        <dbReference type="ChEBI" id="CHEBI:29105"/>
    </ligand>
</feature>
<feature type="binding site" evidence="1">
    <location>
        <position position="429"/>
    </location>
    <ligand>
        <name>Zn(2+)</name>
        <dbReference type="ChEBI" id="CHEBI:29105"/>
    </ligand>
</feature>
<feature type="binding site" evidence="1">
    <location>
        <position position="435"/>
    </location>
    <ligand>
        <name>Zn(2+)</name>
        <dbReference type="ChEBI" id="CHEBI:29105"/>
    </ligand>
</feature>
<keyword id="KW-0227">DNA damage</keyword>
<keyword id="KW-0234">DNA repair</keyword>
<keyword id="KW-0235">DNA replication</keyword>
<keyword id="KW-0436">Ligase</keyword>
<keyword id="KW-0460">Magnesium</keyword>
<keyword id="KW-0464">Manganese</keyword>
<keyword id="KW-0479">Metal-binding</keyword>
<keyword id="KW-0520">NAD</keyword>
<keyword id="KW-1185">Reference proteome</keyword>
<keyword id="KW-0862">Zinc</keyword>
<dbReference type="EC" id="6.5.1.2" evidence="1"/>
<dbReference type="EMBL" id="CP000263">
    <property type="protein sequence ID" value="ABJ90520.1"/>
    <property type="molecule type" value="Genomic_DNA"/>
</dbReference>
<dbReference type="RefSeq" id="WP_011672439.1">
    <property type="nucleotide sequence ID" value="NC_008513.1"/>
</dbReference>
<dbReference type="SMR" id="Q058C9"/>
<dbReference type="STRING" id="372461.BCc_039"/>
<dbReference type="KEGG" id="bcc:BCc_039"/>
<dbReference type="eggNOG" id="COG0272">
    <property type="taxonomic scope" value="Bacteria"/>
</dbReference>
<dbReference type="HOGENOM" id="CLU_007764_2_0_6"/>
<dbReference type="OrthoDB" id="9759736at2"/>
<dbReference type="Proteomes" id="UP000000669">
    <property type="component" value="Chromosome"/>
</dbReference>
<dbReference type="GO" id="GO:0003911">
    <property type="term" value="F:DNA ligase (NAD+) activity"/>
    <property type="evidence" value="ECO:0007669"/>
    <property type="project" value="UniProtKB-UniRule"/>
</dbReference>
<dbReference type="GO" id="GO:0046872">
    <property type="term" value="F:metal ion binding"/>
    <property type="evidence" value="ECO:0007669"/>
    <property type="project" value="UniProtKB-KW"/>
</dbReference>
<dbReference type="GO" id="GO:0006281">
    <property type="term" value="P:DNA repair"/>
    <property type="evidence" value="ECO:0007669"/>
    <property type="project" value="UniProtKB-KW"/>
</dbReference>
<dbReference type="GO" id="GO:0006260">
    <property type="term" value="P:DNA replication"/>
    <property type="evidence" value="ECO:0007669"/>
    <property type="project" value="UniProtKB-KW"/>
</dbReference>
<dbReference type="CDD" id="cd00114">
    <property type="entry name" value="LIGANc"/>
    <property type="match status" value="1"/>
</dbReference>
<dbReference type="FunFam" id="3.30.470.30:FF:000001">
    <property type="entry name" value="DNA ligase"/>
    <property type="match status" value="1"/>
</dbReference>
<dbReference type="Gene3D" id="1.10.150.20">
    <property type="entry name" value="5' to 3' exonuclease, C-terminal subdomain"/>
    <property type="match status" value="2"/>
</dbReference>
<dbReference type="Gene3D" id="3.30.470.30">
    <property type="entry name" value="DNA ligase/mRNA capping enzyme"/>
    <property type="match status" value="1"/>
</dbReference>
<dbReference type="Gene3D" id="1.10.287.610">
    <property type="entry name" value="Helix hairpin bin"/>
    <property type="match status" value="1"/>
</dbReference>
<dbReference type="Gene3D" id="2.40.50.140">
    <property type="entry name" value="Nucleic acid-binding proteins"/>
    <property type="match status" value="1"/>
</dbReference>
<dbReference type="HAMAP" id="MF_01588">
    <property type="entry name" value="DNA_ligase_A"/>
    <property type="match status" value="1"/>
</dbReference>
<dbReference type="InterPro" id="IPR041663">
    <property type="entry name" value="DisA/LigA_HHH"/>
</dbReference>
<dbReference type="InterPro" id="IPR001679">
    <property type="entry name" value="DNA_ligase"/>
</dbReference>
<dbReference type="InterPro" id="IPR018239">
    <property type="entry name" value="DNA_ligase_AS"/>
</dbReference>
<dbReference type="InterPro" id="IPR033136">
    <property type="entry name" value="DNA_ligase_CS"/>
</dbReference>
<dbReference type="InterPro" id="IPR013839">
    <property type="entry name" value="DNAligase_adenylation"/>
</dbReference>
<dbReference type="InterPro" id="IPR013840">
    <property type="entry name" value="DNAligase_N"/>
</dbReference>
<dbReference type="InterPro" id="IPR012340">
    <property type="entry name" value="NA-bd_OB-fold"/>
</dbReference>
<dbReference type="InterPro" id="IPR004150">
    <property type="entry name" value="NAD_DNA_ligase_OB"/>
</dbReference>
<dbReference type="InterPro" id="IPR010994">
    <property type="entry name" value="RuvA_2-like"/>
</dbReference>
<dbReference type="NCBIfam" id="TIGR00575">
    <property type="entry name" value="dnlj"/>
    <property type="match status" value="1"/>
</dbReference>
<dbReference type="NCBIfam" id="NF005932">
    <property type="entry name" value="PRK07956.1"/>
    <property type="match status" value="1"/>
</dbReference>
<dbReference type="Pfam" id="PF01653">
    <property type="entry name" value="DNA_ligase_aden"/>
    <property type="match status" value="1"/>
</dbReference>
<dbReference type="Pfam" id="PF03120">
    <property type="entry name" value="DNA_ligase_OB"/>
    <property type="match status" value="1"/>
</dbReference>
<dbReference type="Pfam" id="PF12826">
    <property type="entry name" value="HHH_2"/>
    <property type="match status" value="1"/>
</dbReference>
<dbReference type="Pfam" id="PF22745">
    <property type="entry name" value="Nlig-Ia"/>
    <property type="match status" value="1"/>
</dbReference>
<dbReference type="PIRSF" id="PIRSF001604">
    <property type="entry name" value="LigA"/>
    <property type="match status" value="1"/>
</dbReference>
<dbReference type="SMART" id="SM00532">
    <property type="entry name" value="LIGANc"/>
    <property type="match status" value="1"/>
</dbReference>
<dbReference type="SUPFAM" id="SSF56091">
    <property type="entry name" value="DNA ligase/mRNA capping enzyme, catalytic domain"/>
    <property type="match status" value="1"/>
</dbReference>
<dbReference type="SUPFAM" id="SSF50249">
    <property type="entry name" value="Nucleic acid-binding proteins"/>
    <property type="match status" value="1"/>
</dbReference>
<dbReference type="SUPFAM" id="SSF47781">
    <property type="entry name" value="RuvA domain 2-like"/>
    <property type="match status" value="1"/>
</dbReference>
<dbReference type="PROSITE" id="PS01055">
    <property type="entry name" value="DNA_LIGASE_N1"/>
    <property type="match status" value="1"/>
</dbReference>
<dbReference type="PROSITE" id="PS01056">
    <property type="entry name" value="DNA_LIGASE_N2"/>
    <property type="match status" value="1"/>
</dbReference>
<reference key="1">
    <citation type="journal article" date="2006" name="Science">
        <title>A small microbial genome: the end of a long symbiotic relationship?</title>
        <authorList>
            <person name="Perez-Brocal V."/>
            <person name="Gil R."/>
            <person name="Ramos S."/>
            <person name="Lamelas A."/>
            <person name="Postigo M."/>
            <person name="Michelena J.M."/>
            <person name="Silva F.J."/>
            <person name="Moya A."/>
            <person name="Latorre A."/>
        </authorList>
    </citation>
    <scope>NUCLEOTIDE SEQUENCE [LARGE SCALE GENOMIC DNA]</scope>
    <source>
        <strain>Cc</strain>
    </source>
</reference>
<sequence>MKDIYNQILKLQLQIKYHNYMYHTLDSPIISDILYDELYNKLLQLEKLYFKKKSLDKKIKLLDQVGAKKLHIFTEFFHKIPMLSLRSINNISDFDLFDKKIKEYFKHINVITYFCDFKFDGLAVNLFYKNGILISASTRGNGSVGENITKNILMISSIPKKIAGSNIPKKIEIRGEIFMRKSDFFILNQSCKLSGKKEFSNPRNAAAGSVRQLNPEIVKKRKLNFFVYGFGLFDYNKKIDSHYQRLLQIKKWGFPLYKNYCVCKNKKEVIHFYHYANKIRSQLDFEIDGIVIKLDSIKLQNNLGCIEKYPKWAIALKFFSLDKETKIFKISFKVGRTGIITPVAYFFPINLFGVSISKASLYNIKTIKLLDIRLHDYVTVYRAGDVIPKIRNVLIHKRNKYTQKIIIPTYCPSCCTKLIFSDDLKTCYCPASFSCFSQNVKRLIYFSSKNGLNFKGLGKKNIIKLINYGYLYTPIDFFSLTVKKLKNIFRMGDKLSEKIIKNIAFSKRVSLDKFICSLGIFGVGTSIAKRLAYYYRSVEKFFNTNYDTLSKIDHIGYNISNAIISFLKNKSNRSIILKLIRILNIFI</sequence>
<organism>
    <name type="scientific">Buchnera aphidicola subsp. Cinara cedri (strain Cc)</name>
    <dbReference type="NCBI Taxonomy" id="372461"/>
    <lineage>
        <taxon>Bacteria</taxon>
        <taxon>Pseudomonadati</taxon>
        <taxon>Pseudomonadota</taxon>
        <taxon>Gammaproteobacteria</taxon>
        <taxon>Enterobacterales</taxon>
        <taxon>Erwiniaceae</taxon>
        <taxon>Buchnera</taxon>
    </lineage>
</organism>
<evidence type="ECO:0000255" key="1">
    <source>
        <dbReference type="HAMAP-Rule" id="MF_01588"/>
    </source>
</evidence>